<sequence>MDIILASGSPRRRELLSRVQLEFTVISVDIDETPYQDESPEDYIVRMVAAKAEAATVQLNRQLKNNDAHIYQSLLSKPIILLTSDTIGVLPDGKTVLVKPNNREDAYRMWQQMSDSTHEVWTAVQATQLSLQPKRSDEFNNEQVWQIINQQQIIERTEVTFVALTLEMMSDYWDSGEPADKAGGYGIQGLGAAWVSRINGSYTNVVGLPLAQTLALIKEMNDTDTL</sequence>
<protein>
    <recommendedName>
        <fullName evidence="1">dTTP/UTP pyrophosphatase</fullName>
        <shortName evidence="1">dTTPase/UTPase</shortName>
        <ecNumber evidence="1">3.6.1.9</ecNumber>
    </recommendedName>
    <alternativeName>
        <fullName evidence="1">Nucleoside triphosphate pyrophosphatase</fullName>
    </alternativeName>
    <alternativeName>
        <fullName evidence="1">Nucleotide pyrophosphatase</fullName>
        <shortName evidence="1">Nucleotide PPase</shortName>
    </alternativeName>
</protein>
<proteinExistence type="inferred from homology"/>
<feature type="chain" id="PRO_0000267386" description="dTTP/UTP pyrophosphatase">
    <location>
        <begin position="1"/>
        <end position="226"/>
    </location>
</feature>
<feature type="active site" description="Proton acceptor" evidence="1">
    <location>
        <position position="85"/>
    </location>
</feature>
<feature type="site" description="Important for substrate specificity" evidence="1">
    <location>
        <position position="11"/>
    </location>
</feature>
<feature type="site" description="Important for substrate specificity" evidence="1">
    <location>
        <position position="86"/>
    </location>
</feature>
<feature type="site" description="Important for substrate specificity" evidence="1">
    <location>
        <position position="188"/>
    </location>
</feature>
<name>NTPPA_PSYCK</name>
<comment type="function">
    <text evidence="1">Nucleoside triphosphate pyrophosphatase that hydrolyzes dTTP and UTP. May have a dual role in cell division arrest and in preventing the incorporation of modified nucleotides into cellular nucleic acids.</text>
</comment>
<comment type="catalytic activity">
    <reaction evidence="1">
        <text>dTTP + H2O = dTMP + diphosphate + H(+)</text>
        <dbReference type="Rhea" id="RHEA:28534"/>
        <dbReference type="ChEBI" id="CHEBI:15377"/>
        <dbReference type="ChEBI" id="CHEBI:15378"/>
        <dbReference type="ChEBI" id="CHEBI:33019"/>
        <dbReference type="ChEBI" id="CHEBI:37568"/>
        <dbReference type="ChEBI" id="CHEBI:63528"/>
        <dbReference type="EC" id="3.6.1.9"/>
    </reaction>
</comment>
<comment type="catalytic activity">
    <reaction evidence="1">
        <text>UTP + H2O = UMP + diphosphate + H(+)</text>
        <dbReference type="Rhea" id="RHEA:29395"/>
        <dbReference type="ChEBI" id="CHEBI:15377"/>
        <dbReference type="ChEBI" id="CHEBI:15378"/>
        <dbReference type="ChEBI" id="CHEBI:33019"/>
        <dbReference type="ChEBI" id="CHEBI:46398"/>
        <dbReference type="ChEBI" id="CHEBI:57865"/>
        <dbReference type="EC" id="3.6.1.9"/>
    </reaction>
</comment>
<comment type="cofactor">
    <cofactor evidence="1">
        <name>a divalent metal cation</name>
        <dbReference type="ChEBI" id="CHEBI:60240"/>
    </cofactor>
</comment>
<comment type="subcellular location">
    <subcellularLocation>
        <location evidence="1">Cytoplasm</location>
    </subcellularLocation>
</comment>
<comment type="similarity">
    <text evidence="1">Belongs to the Maf family. YhdE subfamily.</text>
</comment>
<comment type="sequence caution" evidence="2">
    <conflict type="erroneous initiation">
        <sequence resource="EMBL-CDS" id="ABE74264"/>
    </conflict>
</comment>
<gene>
    <name type="ordered locus">Pcryo_0481</name>
</gene>
<dbReference type="EC" id="3.6.1.9" evidence="1"/>
<dbReference type="EMBL" id="CP000323">
    <property type="protein sequence ID" value="ABE74264.1"/>
    <property type="status" value="ALT_INIT"/>
    <property type="molecule type" value="Genomic_DNA"/>
</dbReference>
<dbReference type="RefSeq" id="WP_041752962.1">
    <property type="nucleotide sequence ID" value="NC_007969.1"/>
</dbReference>
<dbReference type="SMR" id="Q1QDI9"/>
<dbReference type="STRING" id="335284.Pcryo_0481"/>
<dbReference type="KEGG" id="pcr:Pcryo_0481"/>
<dbReference type="eggNOG" id="COG0424">
    <property type="taxonomic scope" value="Bacteria"/>
</dbReference>
<dbReference type="HOGENOM" id="CLU_040416_2_1_6"/>
<dbReference type="Proteomes" id="UP000002425">
    <property type="component" value="Chromosome"/>
</dbReference>
<dbReference type="GO" id="GO:0005737">
    <property type="term" value="C:cytoplasm"/>
    <property type="evidence" value="ECO:0007669"/>
    <property type="project" value="UniProtKB-SubCell"/>
</dbReference>
<dbReference type="GO" id="GO:0036218">
    <property type="term" value="F:dTTP diphosphatase activity"/>
    <property type="evidence" value="ECO:0007669"/>
    <property type="project" value="RHEA"/>
</dbReference>
<dbReference type="GO" id="GO:0036221">
    <property type="term" value="F:UTP diphosphatase activity"/>
    <property type="evidence" value="ECO:0007669"/>
    <property type="project" value="RHEA"/>
</dbReference>
<dbReference type="GO" id="GO:0009117">
    <property type="term" value="P:nucleotide metabolic process"/>
    <property type="evidence" value="ECO:0007669"/>
    <property type="project" value="UniProtKB-KW"/>
</dbReference>
<dbReference type="CDD" id="cd00555">
    <property type="entry name" value="Maf"/>
    <property type="match status" value="1"/>
</dbReference>
<dbReference type="Gene3D" id="3.90.950.10">
    <property type="match status" value="1"/>
</dbReference>
<dbReference type="HAMAP" id="MF_00528">
    <property type="entry name" value="Maf"/>
    <property type="match status" value="1"/>
</dbReference>
<dbReference type="InterPro" id="IPR029001">
    <property type="entry name" value="ITPase-like_fam"/>
</dbReference>
<dbReference type="InterPro" id="IPR003697">
    <property type="entry name" value="Maf-like"/>
</dbReference>
<dbReference type="NCBIfam" id="TIGR00172">
    <property type="entry name" value="maf"/>
    <property type="match status" value="1"/>
</dbReference>
<dbReference type="PANTHER" id="PTHR43213">
    <property type="entry name" value="BIFUNCTIONAL DTTP/UTP PYROPHOSPHATASE/METHYLTRANSFERASE PROTEIN-RELATED"/>
    <property type="match status" value="1"/>
</dbReference>
<dbReference type="PANTHER" id="PTHR43213:SF5">
    <property type="entry name" value="BIFUNCTIONAL DTTP_UTP PYROPHOSPHATASE_METHYLTRANSFERASE PROTEIN-RELATED"/>
    <property type="match status" value="1"/>
</dbReference>
<dbReference type="Pfam" id="PF02545">
    <property type="entry name" value="Maf"/>
    <property type="match status" value="1"/>
</dbReference>
<dbReference type="PIRSF" id="PIRSF006305">
    <property type="entry name" value="Maf"/>
    <property type="match status" value="1"/>
</dbReference>
<dbReference type="SUPFAM" id="SSF52972">
    <property type="entry name" value="ITPase-like"/>
    <property type="match status" value="1"/>
</dbReference>
<organism>
    <name type="scientific">Psychrobacter cryohalolentis (strain ATCC BAA-1226 / DSM 17306 / VKM B-2378 / K5)</name>
    <dbReference type="NCBI Taxonomy" id="335284"/>
    <lineage>
        <taxon>Bacteria</taxon>
        <taxon>Pseudomonadati</taxon>
        <taxon>Pseudomonadota</taxon>
        <taxon>Gammaproteobacteria</taxon>
        <taxon>Moraxellales</taxon>
        <taxon>Moraxellaceae</taxon>
        <taxon>Psychrobacter</taxon>
    </lineage>
</organism>
<reference key="1">
    <citation type="submission" date="2006-03" db="EMBL/GenBank/DDBJ databases">
        <title>Complete sequence of chromosome of Psychrobacter cryohalolentis K5.</title>
        <authorList>
            <consortium name="US DOE Joint Genome Institute"/>
            <person name="Copeland A."/>
            <person name="Lucas S."/>
            <person name="Lapidus A."/>
            <person name="Barry K."/>
            <person name="Detter J.C."/>
            <person name="Glavina T."/>
            <person name="Hammon N."/>
            <person name="Israni S."/>
            <person name="Dalin E."/>
            <person name="Tice H."/>
            <person name="Pitluck S."/>
            <person name="Brettin T."/>
            <person name="Bruce D."/>
            <person name="Han C."/>
            <person name="Tapia R."/>
            <person name="Sims D.R."/>
            <person name="Gilna P."/>
            <person name="Schmutz J."/>
            <person name="Larimer F."/>
            <person name="Land M."/>
            <person name="Hauser L."/>
            <person name="Kyrpides N."/>
            <person name="Kim E."/>
            <person name="Richardson P."/>
        </authorList>
    </citation>
    <scope>NUCLEOTIDE SEQUENCE [LARGE SCALE GENOMIC DNA]</scope>
    <source>
        <strain>ATCC BAA-1226 / DSM 17306 / VKM B-2378 / K5</strain>
    </source>
</reference>
<evidence type="ECO:0000255" key="1">
    <source>
        <dbReference type="HAMAP-Rule" id="MF_00528"/>
    </source>
</evidence>
<evidence type="ECO:0000305" key="2"/>
<keyword id="KW-0963">Cytoplasm</keyword>
<keyword id="KW-0378">Hydrolase</keyword>
<keyword id="KW-0546">Nucleotide metabolism</keyword>
<accession>Q1QDI9</accession>